<feature type="initiator methionine" description="Removed" evidence="2">
    <location>
        <position position="1"/>
    </location>
</feature>
<feature type="chain" id="PRO_0000240307" description="Peptidylprolyl isomerase domain and WD repeat-containing protein 1">
    <location>
        <begin position="2"/>
        <end position="646"/>
    </location>
</feature>
<feature type="repeat" description="WD 1">
    <location>
        <begin position="88"/>
        <end position="126"/>
    </location>
</feature>
<feature type="repeat" description="WD 2">
    <location>
        <begin position="131"/>
        <end position="170"/>
    </location>
</feature>
<feature type="repeat" description="WD 3">
    <location>
        <begin position="221"/>
        <end position="260"/>
    </location>
</feature>
<feature type="repeat" description="WD 4">
    <location>
        <begin position="278"/>
        <end position="319"/>
    </location>
</feature>
<feature type="domain" description="PPIase cyclophilin-type" evidence="3">
    <location>
        <begin position="490"/>
        <end position="645"/>
    </location>
</feature>
<feature type="region of interest" description="Disordered" evidence="4">
    <location>
        <begin position="1"/>
        <end position="50"/>
    </location>
</feature>
<feature type="compositionally biased region" description="Basic and acidic residues" evidence="4">
    <location>
        <begin position="17"/>
        <end position="32"/>
    </location>
</feature>
<feature type="modified residue" description="N-acetylalanine" evidence="2">
    <location>
        <position position="2"/>
    </location>
</feature>
<feature type="sequence conflict" description="In Ref. 1; BAC25996." evidence="5" ref="1">
    <original>T</original>
    <variation>P</variation>
    <location>
        <position position="385"/>
    </location>
</feature>
<feature type="sequence conflict" description="In Ref. 1; BAC25996." evidence="5" ref="1">
    <original>P</original>
    <variation>T</variation>
    <location>
        <position position="456"/>
    </location>
</feature>
<feature type="sequence conflict" description="In Ref. 1; BAC25996." evidence="5" ref="1">
    <original>T</original>
    <variation>S</variation>
    <location>
        <position position="613"/>
    </location>
</feature>
<feature type="sequence conflict" description="In Ref. 1; BAC25996." evidence="5" ref="1">
    <original>S</original>
    <variation>F</variation>
    <location>
        <position position="623"/>
    </location>
</feature>
<feature type="sequence conflict" description="In Ref. 1; BAC25996." evidence="5" ref="1">
    <original>K</original>
    <variation>Q</variation>
    <location>
        <position position="630"/>
    </location>
</feature>
<protein>
    <recommendedName>
        <fullName evidence="5">Peptidylprolyl isomerase domain and WD repeat-containing protein 1</fullName>
        <ecNumber evidence="2">5.2.1.8</ecNumber>
    </recommendedName>
</protein>
<accession>Q8CEC6</accession>
<accession>Q0VEA0</accession>
<evidence type="ECO:0000250" key="1"/>
<evidence type="ECO:0000250" key="2">
    <source>
        <dbReference type="UniProtKB" id="Q96BP3"/>
    </source>
</evidence>
<evidence type="ECO:0000255" key="3">
    <source>
        <dbReference type="PROSITE-ProRule" id="PRU00156"/>
    </source>
</evidence>
<evidence type="ECO:0000256" key="4">
    <source>
        <dbReference type="SAM" id="MobiDB-lite"/>
    </source>
</evidence>
<evidence type="ECO:0000305" key="5"/>
<evidence type="ECO:0000312" key="6">
    <source>
        <dbReference type="MGI" id="MGI:2443069"/>
    </source>
</evidence>
<proteinExistence type="evidence at protein level"/>
<reference key="1">
    <citation type="journal article" date="2005" name="Science">
        <title>The transcriptional landscape of the mammalian genome.</title>
        <authorList>
            <person name="Carninci P."/>
            <person name="Kasukawa T."/>
            <person name="Katayama S."/>
            <person name="Gough J."/>
            <person name="Frith M.C."/>
            <person name="Maeda N."/>
            <person name="Oyama R."/>
            <person name="Ravasi T."/>
            <person name="Lenhard B."/>
            <person name="Wells C."/>
            <person name="Kodzius R."/>
            <person name="Shimokawa K."/>
            <person name="Bajic V.B."/>
            <person name="Brenner S.E."/>
            <person name="Batalov S."/>
            <person name="Forrest A.R."/>
            <person name="Zavolan M."/>
            <person name="Davis M.J."/>
            <person name="Wilming L.G."/>
            <person name="Aidinis V."/>
            <person name="Allen J.E."/>
            <person name="Ambesi-Impiombato A."/>
            <person name="Apweiler R."/>
            <person name="Aturaliya R.N."/>
            <person name="Bailey T.L."/>
            <person name="Bansal M."/>
            <person name="Baxter L."/>
            <person name="Beisel K.W."/>
            <person name="Bersano T."/>
            <person name="Bono H."/>
            <person name="Chalk A.M."/>
            <person name="Chiu K.P."/>
            <person name="Choudhary V."/>
            <person name="Christoffels A."/>
            <person name="Clutterbuck D.R."/>
            <person name="Crowe M.L."/>
            <person name="Dalla E."/>
            <person name="Dalrymple B.P."/>
            <person name="de Bono B."/>
            <person name="Della Gatta G."/>
            <person name="di Bernardo D."/>
            <person name="Down T."/>
            <person name="Engstrom P."/>
            <person name="Fagiolini M."/>
            <person name="Faulkner G."/>
            <person name="Fletcher C.F."/>
            <person name="Fukushima T."/>
            <person name="Furuno M."/>
            <person name="Futaki S."/>
            <person name="Gariboldi M."/>
            <person name="Georgii-Hemming P."/>
            <person name="Gingeras T.R."/>
            <person name="Gojobori T."/>
            <person name="Green R.E."/>
            <person name="Gustincich S."/>
            <person name="Harbers M."/>
            <person name="Hayashi Y."/>
            <person name="Hensch T.K."/>
            <person name="Hirokawa N."/>
            <person name="Hill D."/>
            <person name="Huminiecki L."/>
            <person name="Iacono M."/>
            <person name="Ikeo K."/>
            <person name="Iwama A."/>
            <person name="Ishikawa T."/>
            <person name="Jakt M."/>
            <person name="Kanapin A."/>
            <person name="Katoh M."/>
            <person name="Kawasawa Y."/>
            <person name="Kelso J."/>
            <person name="Kitamura H."/>
            <person name="Kitano H."/>
            <person name="Kollias G."/>
            <person name="Krishnan S.P."/>
            <person name="Kruger A."/>
            <person name="Kummerfeld S.K."/>
            <person name="Kurochkin I.V."/>
            <person name="Lareau L.F."/>
            <person name="Lazarevic D."/>
            <person name="Lipovich L."/>
            <person name="Liu J."/>
            <person name="Liuni S."/>
            <person name="McWilliam S."/>
            <person name="Madan Babu M."/>
            <person name="Madera M."/>
            <person name="Marchionni L."/>
            <person name="Matsuda H."/>
            <person name="Matsuzawa S."/>
            <person name="Miki H."/>
            <person name="Mignone F."/>
            <person name="Miyake S."/>
            <person name="Morris K."/>
            <person name="Mottagui-Tabar S."/>
            <person name="Mulder N."/>
            <person name="Nakano N."/>
            <person name="Nakauchi H."/>
            <person name="Ng P."/>
            <person name="Nilsson R."/>
            <person name="Nishiguchi S."/>
            <person name="Nishikawa S."/>
            <person name="Nori F."/>
            <person name="Ohara O."/>
            <person name="Okazaki Y."/>
            <person name="Orlando V."/>
            <person name="Pang K.C."/>
            <person name="Pavan W.J."/>
            <person name="Pavesi G."/>
            <person name="Pesole G."/>
            <person name="Petrovsky N."/>
            <person name="Piazza S."/>
            <person name="Reed J."/>
            <person name="Reid J.F."/>
            <person name="Ring B.Z."/>
            <person name="Ringwald M."/>
            <person name="Rost B."/>
            <person name="Ruan Y."/>
            <person name="Salzberg S.L."/>
            <person name="Sandelin A."/>
            <person name="Schneider C."/>
            <person name="Schoenbach C."/>
            <person name="Sekiguchi K."/>
            <person name="Semple C.A."/>
            <person name="Seno S."/>
            <person name="Sessa L."/>
            <person name="Sheng Y."/>
            <person name="Shibata Y."/>
            <person name="Shimada H."/>
            <person name="Shimada K."/>
            <person name="Silva D."/>
            <person name="Sinclair B."/>
            <person name="Sperling S."/>
            <person name="Stupka E."/>
            <person name="Sugiura K."/>
            <person name="Sultana R."/>
            <person name="Takenaka Y."/>
            <person name="Taki K."/>
            <person name="Tammoja K."/>
            <person name="Tan S.L."/>
            <person name="Tang S."/>
            <person name="Taylor M.S."/>
            <person name="Tegner J."/>
            <person name="Teichmann S.A."/>
            <person name="Ueda H.R."/>
            <person name="van Nimwegen E."/>
            <person name="Verardo R."/>
            <person name="Wei C.L."/>
            <person name="Yagi K."/>
            <person name="Yamanishi H."/>
            <person name="Zabarovsky E."/>
            <person name="Zhu S."/>
            <person name="Zimmer A."/>
            <person name="Hide W."/>
            <person name="Bult C."/>
            <person name="Grimmond S.M."/>
            <person name="Teasdale R.D."/>
            <person name="Liu E.T."/>
            <person name="Brusic V."/>
            <person name="Quackenbush J."/>
            <person name="Wahlestedt C."/>
            <person name="Mattick J.S."/>
            <person name="Hume D.A."/>
            <person name="Kai C."/>
            <person name="Sasaki D."/>
            <person name="Tomaru Y."/>
            <person name="Fukuda S."/>
            <person name="Kanamori-Katayama M."/>
            <person name="Suzuki M."/>
            <person name="Aoki J."/>
            <person name="Arakawa T."/>
            <person name="Iida J."/>
            <person name="Imamura K."/>
            <person name="Itoh M."/>
            <person name="Kato T."/>
            <person name="Kawaji H."/>
            <person name="Kawagashira N."/>
            <person name="Kawashima T."/>
            <person name="Kojima M."/>
            <person name="Kondo S."/>
            <person name="Konno H."/>
            <person name="Nakano K."/>
            <person name="Ninomiya N."/>
            <person name="Nishio T."/>
            <person name="Okada M."/>
            <person name="Plessy C."/>
            <person name="Shibata K."/>
            <person name="Shiraki T."/>
            <person name="Suzuki S."/>
            <person name="Tagami M."/>
            <person name="Waki K."/>
            <person name="Watahiki A."/>
            <person name="Okamura-Oho Y."/>
            <person name="Suzuki H."/>
            <person name="Kawai J."/>
            <person name="Hayashizaki Y."/>
        </authorList>
    </citation>
    <scope>NUCLEOTIDE SEQUENCE [LARGE SCALE MRNA]</scope>
    <source>
        <strain>C57BL/6J</strain>
        <tissue>Skin</tissue>
    </source>
</reference>
<reference key="2">
    <citation type="journal article" date="2004" name="Genome Res.">
        <title>The status, quality, and expansion of the NIH full-length cDNA project: the Mammalian Gene Collection (MGC).</title>
        <authorList>
            <consortium name="The MGC Project Team"/>
        </authorList>
    </citation>
    <scope>NUCLEOTIDE SEQUENCE [LARGE SCALE MRNA]</scope>
    <source>
        <tissue>Brain</tissue>
    </source>
</reference>
<reference key="3">
    <citation type="journal article" date="2010" name="Cell">
        <title>A tissue-specific atlas of mouse protein phosphorylation and expression.</title>
        <authorList>
            <person name="Huttlin E.L."/>
            <person name="Jedrychowski M.P."/>
            <person name="Elias J.E."/>
            <person name="Goswami T."/>
            <person name="Rad R."/>
            <person name="Beausoleil S.A."/>
            <person name="Villen J."/>
            <person name="Haas W."/>
            <person name="Sowa M.E."/>
            <person name="Gygi S.P."/>
        </authorList>
    </citation>
    <scope>IDENTIFICATION BY MASS SPECTROMETRY [LARGE SCALE ANALYSIS]</scope>
    <source>
        <tissue>Lung</tissue>
        <tissue>Spleen</tissue>
        <tissue>Testis</tissue>
    </source>
</reference>
<name>PPWD1_MOUSE</name>
<sequence length="646" mass="73385">MATESGSDSQLRRRRRRDPEGSEKTELSEREPALAVAGSEENDDENEERWVGPLPVEATLAKKRKVLEFERVYLDNLPSASMYERSYMHRDVITHVVCTKTDFIITASHDGHVKFWKKIEEGIEFVKHFRSHLGVIESIAVSSEGALFCSVGDDKAMKVFDVVNFDMINMLKLGYFPGQCEWIYCPGDAISSVAASEKSTGKIFIYDGRGDNQPLHIFDKLHVSPLTQIRLNPVYKAVVSSDKSGMIEYWTGPPHEYKFPKNVNWEYKTDTDLYEFAKCKAYPTSICFSPDGKKIATIGSDRKVRIFRFLTGKLMRVFDESLSMFTELQQMRQQLPDMEFGRRMAVERELEKVDAVRLVNIVFDETGHFVLYGTMLGIKVINVETNRCVRILGKQENIRVMQLALFQGIAKKHRAAATIEMKASENPVLQNIQADPTIVCTSFKKNRFYMFTKREPEDTKTADSDRDVFNEKPSKEEVMAATQAEGPKRVSDSAIVHTSMGDIHIKLFPVECPKTVENFCVHSRNGYYNGHTFHRIIKGFMIQTGDPTGTGMGGESIWGGEFEDEFHSTLRHDRPYTLSMANAGSNTNGSQFFITVVPTPWLDNKHTVFGRVTKGMEVVQRISNVKVNPKTDKPYEDVSIINITVK</sequence>
<comment type="function">
    <text evidence="2">PPIase that catalyzes the cis-trans isomerization of proline imidic peptide bonds in oligopeptides and may therefore assist protein folding. May be involved in pre-mRNA splicing.</text>
</comment>
<comment type="catalytic activity">
    <reaction evidence="2">
        <text>[protein]-peptidylproline (omega=180) = [protein]-peptidylproline (omega=0)</text>
        <dbReference type="Rhea" id="RHEA:16237"/>
        <dbReference type="Rhea" id="RHEA-COMP:10747"/>
        <dbReference type="Rhea" id="RHEA-COMP:10748"/>
        <dbReference type="ChEBI" id="CHEBI:83833"/>
        <dbReference type="ChEBI" id="CHEBI:83834"/>
        <dbReference type="EC" id="5.2.1.8"/>
    </reaction>
</comment>
<comment type="activity regulation">
    <text evidence="2">Inhibited by cyclosporin A (CsA).</text>
</comment>
<comment type="subunit">
    <text evidence="2">Identified in the spliceosome C complex.</text>
</comment>
<comment type="subcellular location">
    <subcellularLocation>
        <location evidence="2">Nucleus</location>
    </subcellularLocation>
    <text evidence="1 2">Associated with spliceosomal complexes.</text>
</comment>
<comment type="similarity">
    <text evidence="5">Belongs to the cyclophilin-type PPIase family. PPIL1 subfamily.</text>
</comment>
<dbReference type="EC" id="5.2.1.8" evidence="2"/>
<dbReference type="EMBL" id="AK028532">
    <property type="protein sequence ID" value="BAC25996.1"/>
    <property type="molecule type" value="mRNA"/>
</dbReference>
<dbReference type="EMBL" id="BC119282">
    <property type="protein sequence ID" value="AAI19283.1"/>
    <property type="molecule type" value="mRNA"/>
</dbReference>
<dbReference type="EMBL" id="BC119310">
    <property type="protein sequence ID" value="AAI19311.1"/>
    <property type="molecule type" value="mRNA"/>
</dbReference>
<dbReference type="CCDS" id="CCDS26748.1"/>
<dbReference type="RefSeq" id="NP_766395.2">
    <property type="nucleotide sequence ID" value="NM_172807.4"/>
</dbReference>
<dbReference type="SMR" id="Q8CEC6"/>
<dbReference type="BioGRID" id="232021">
    <property type="interactions" value="53"/>
</dbReference>
<dbReference type="FunCoup" id="Q8CEC6">
    <property type="interactions" value="3025"/>
</dbReference>
<dbReference type="STRING" id="10090.ENSMUSP00000022226"/>
<dbReference type="GlyGen" id="Q8CEC6">
    <property type="glycosylation" value="1 site"/>
</dbReference>
<dbReference type="iPTMnet" id="Q8CEC6"/>
<dbReference type="PhosphoSitePlus" id="Q8CEC6"/>
<dbReference type="SwissPalm" id="Q8CEC6"/>
<dbReference type="PaxDb" id="10090-ENSMUSP00000022226"/>
<dbReference type="PeptideAtlas" id="Q8CEC6"/>
<dbReference type="ProteomicsDB" id="289820"/>
<dbReference type="Pumba" id="Q8CEC6"/>
<dbReference type="Antibodypedia" id="11576">
    <property type="antibodies" value="218 antibodies from 23 providers"/>
</dbReference>
<dbReference type="DNASU" id="238831"/>
<dbReference type="Ensembl" id="ENSMUST00000022226.6">
    <property type="protein sequence ID" value="ENSMUSP00000022226.5"/>
    <property type="gene ID" value="ENSMUSG00000021713.10"/>
</dbReference>
<dbReference type="GeneID" id="238831"/>
<dbReference type="KEGG" id="mmu:238831"/>
<dbReference type="UCSC" id="uc007rsz.2">
    <property type="organism name" value="mouse"/>
</dbReference>
<dbReference type="AGR" id="MGI:2443069"/>
<dbReference type="CTD" id="23398"/>
<dbReference type="MGI" id="MGI:2443069">
    <property type="gene designation" value="Ppwd1"/>
</dbReference>
<dbReference type="VEuPathDB" id="HostDB:ENSMUSG00000021713"/>
<dbReference type="eggNOG" id="KOG0882">
    <property type="taxonomic scope" value="Eukaryota"/>
</dbReference>
<dbReference type="GeneTree" id="ENSGT00940000158733"/>
<dbReference type="HOGENOM" id="CLU_012062_31_2_1"/>
<dbReference type="InParanoid" id="Q8CEC6"/>
<dbReference type="OMA" id="GMVEYWR"/>
<dbReference type="OrthoDB" id="10264753at2759"/>
<dbReference type="PhylomeDB" id="Q8CEC6"/>
<dbReference type="TreeFam" id="TF105686"/>
<dbReference type="Reactome" id="R-MMU-72163">
    <property type="pathway name" value="mRNA Splicing - Major Pathway"/>
</dbReference>
<dbReference type="BioGRID-ORCS" id="238831">
    <property type="hits" value="26 hits in 78 CRISPR screens"/>
</dbReference>
<dbReference type="ChiTaRS" id="Ppwd1">
    <property type="organism name" value="mouse"/>
</dbReference>
<dbReference type="PRO" id="PR:Q8CEC6"/>
<dbReference type="Proteomes" id="UP000000589">
    <property type="component" value="Chromosome 13"/>
</dbReference>
<dbReference type="RNAct" id="Q8CEC6">
    <property type="molecule type" value="protein"/>
</dbReference>
<dbReference type="Bgee" id="ENSMUSG00000021713">
    <property type="expression patterns" value="Expressed in animal zygote and 220 other cell types or tissues"/>
</dbReference>
<dbReference type="GO" id="GO:0071013">
    <property type="term" value="C:catalytic step 2 spliceosome"/>
    <property type="evidence" value="ECO:0007669"/>
    <property type="project" value="Ensembl"/>
</dbReference>
<dbReference type="GO" id="GO:0016604">
    <property type="term" value="C:nuclear body"/>
    <property type="evidence" value="ECO:0007669"/>
    <property type="project" value="Ensembl"/>
</dbReference>
<dbReference type="GO" id="GO:0003755">
    <property type="term" value="F:peptidyl-prolyl cis-trans isomerase activity"/>
    <property type="evidence" value="ECO:0000250"/>
    <property type="project" value="UniProtKB"/>
</dbReference>
<dbReference type="GO" id="GO:0006397">
    <property type="term" value="P:mRNA processing"/>
    <property type="evidence" value="ECO:0007669"/>
    <property type="project" value="UniProtKB-KW"/>
</dbReference>
<dbReference type="GO" id="GO:0008380">
    <property type="term" value="P:RNA splicing"/>
    <property type="evidence" value="ECO:0007669"/>
    <property type="project" value="UniProtKB-KW"/>
</dbReference>
<dbReference type="CDD" id="cd01927">
    <property type="entry name" value="cyclophilin_WD40"/>
    <property type="match status" value="1"/>
</dbReference>
<dbReference type="FunFam" id="2.40.100.10:FF:000003">
    <property type="entry name" value="Peptidylprolyl isomerase domain and WD repeat-containing 1"/>
    <property type="match status" value="1"/>
</dbReference>
<dbReference type="FunFam" id="2.130.10.10:FF:000394">
    <property type="entry name" value="Peptidylprolyl isomerase domain and WD repeat-containing protein 1"/>
    <property type="match status" value="1"/>
</dbReference>
<dbReference type="FunFam" id="2.130.10.10:FF:000119">
    <property type="entry name" value="peptidylprolyl isomerase domain and WD repeat-containing protein 1 isoform X2"/>
    <property type="match status" value="1"/>
</dbReference>
<dbReference type="Gene3D" id="2.40.100.10">
    <property type="entry name" value="Cyclophilin-like"/>
    <property type="match status" value="1"/>
</dbReference>
<dbReference type="Gene3D" id="2.130.10.10">
    <property type="entry name" value="YVTN repeat-like/Quinoprotein amine dehydrogenase"/>
    <property type="match status" value="2"/>
</dbReference>
<dbReference type="InterPro" id="IPR029000">
    <property type="entry name" value="Cyclophilin-like_dom_sf"/>
</dbReference>
<dbReference type="InterPro" id="IPR002130">
    <property type="entry name" value="Cyclophilin-type_PPIase_dom"/>
</dbReference>
<dbReference type="InterPro" id="IPR044666">
    <property type="entry name" value="Cyclophilin_A-like"/>
</dbReference>
<dbReference type="InterPro" id="IPR015943">
    <property type="entry name" value="WD40/YVTN_repeat-like_dom_sf"/>
</dbReference>
<dbReference type="InterPro" id="IPR036322">
    <property type="entry name" value="WD40_repeat_dom_sf"/>
</dbReference>
<dbReference type="InterPro" id="IPR001680">
    <property type="entry name" value="WD40_rpt"/>
</dbReference>
<dbReference type="PANTHER" id="PTHR45625">
    <property type="entry name" value="PEPTIDYL-PROLYL CIS-TRANS ISOMERASE-RELATED"/>
    <property type="match status" value="1"/>
</dbReference>
<dbReference type="PANTHER" id="PTHR45625:SF4">
    <property type="entry name" value="PEPTIDYLPROLYL ISOMERASE DOMAIN AND WD REPEAT-CONTAINING PROTEIN 1"/>
    <property type="match status" value="1"/>
</dbReference>
<dbReference type="Pfam" id="PF00160">
    <property type="entry name" value="Pro_isomerase"/>
    <property type="match status" value="1"/>
</dbReference>
<dbReference type="Pfam" id="PF00400">
    <property type="entry name" value="WD40"/>
    <property type="match status" value="3"/>
</dbReference>
<dbReference type="PRINTS" id="PR00153">
    <property type="entry name" value="CSAPPISMRASE"/>
</dbReference>
<dbReference type="SMART" id="SM00320">
    <property type="entry name" value="WD40"/>
    <property type="match status" value="4"/>
</dbReference>
<dbReference type="SUPFAM" id="SSF50891">
    <property type="entry name" value="Cyclophilin-like"/>
    <property type="match status" value="1"/>
</dbReference>
<dbReference type="SUPFAM" id="SSF50978">
    <property type="entry name" value="WD40 repeat-like"/>
    <property type="match status" value="1"/>
</dbReference>
<dbReference type="PROSITE" id="PS50072">
    <property type="entry name" value="CSA_PPIASE_2"/>
    <property type="match status" value="1"/>
</dbReference>
<dbReference type="PROSITE" id="PS50082">
    <property type="entry name" value="WD_REPEATS_2"/>
    <property type="match status" value="1"/>
</dbReference>
<dbReference type="PROSITE" id="PS50294">
    <property type="entry name" value="WD_REPEATS_REGION"/>
    <property type="match status" value="1"/>
</dbReference>
<gene>
    <name evidence="6" type="primary">Ppwd1</name>
</gene>
<organism>
    <name type="scientific">Mus musculus</name>
    <name type="common">Mouse</name>
    <dbReference type="NCBI Taxonomy" id="10090"/>
    <lineage>
        <taxon>Eukaryota</taxon>
        <taxon>Metazoa</taxon>
        <taxon>Chordata</taxon>
        <taxon>Craniata</taxon>
        <taxon>Vertebrata</taxon>
        <taxon>Euteleostomi</taxon>
        <taxon>Mammalia</taxon>
        <taxon>Eutheria</taxon>
        <taxon>Euarchontoglires</taxon>
        <taxon>Glires</taxon>
        <taxon>Rodentia</taxon>
        <taxon>Myomorpha</taxon>
        <taxon>Muroidea</taxon>
        <taxon>Muridae</taxon>
        <taxon>Murinae</taxon>
        <taxon>Mus</taxon>
        <taxon>Mus</taxon>
    </lineage>
</organism>
<keyword id="KW-0007">Acetylation</keyword>
<keyword id="KW-0413">Isomerase</keyword>
<keyword id="KW-0507">mRNA processing</keyword>
<keyword id="KW-0508">mRNA splicing</keyword>
<keyword id="KW-0539">Nucleus</keyword>
<keyword id="KW-1185">Reference proteome</keyword>
<keyword id="KW-0677">Repeat</keyword>
<keyword id="KW-0697">Rotamase</keyword>
<keyword id="KW-0747">Spliceosome</keyword>
<keyword id="KW-0853">WD repeat</keyword>